<organism>
    <name type="scientific">Lawsonia intracellularis (strain PHE/MN1-00)</name>
    <dbReference type="NCBI Taxonomy" id="363253"/>
    <lineage>
        <taxon>Bacteria</taxon>
        <taxon>Pseudomonadati</taxon>
        <taxon>Thermodesulfobacteriota</taxon>
        <taxon>Desulfovibrionia</taxon>
        <taxon>Desulfovibrionales</taxon>
        <taxon>Desulfovibrionaceae</taxon>
        <taxon>Lawsonia</taxon>
    </lineage>
</organism>
<name>RS3_LAWIP</name>
<dbReference type="EMBL" id="AM180252">
    <property type="protein sequence ID" value="CAJ55020.1"/>
    <property type="molecule type" value="Genomic_DNA"/>
</dbReference>
<dbReference type="RefSeq" id="WP_011527049.1">
    <property type="nucleotide sequence ID" value="NC_008011.1"/>
</dbReference>
<dbReference type="SMR" id="Q1MPQ7"/>
<dbReference type="STRING" id="363253.LI0966"/>
<dbReference type="KEGG" id="lip:LI0966"/>
<dbReference type="eggNOG" id="COG0092">
    <property type="taxonomic scope" value="Bacteria"/>
</dbReference>
<dbReference type="HOGENOM" id="CLU_058591_0_2_7"/>
<dbReference type="OrthoDB" id="9806396at2"/>
<dbReference type="Proteomes" id="UP000002430">
    <property type="component" value="Chromosome"/>
</dbReference>
<dbReference type="GO" id="GO:0022627">
    <property type="term" value="C:cytosolic small ribosomal subunit"/>
    <property type="evidence" value="ECO:0007669"/>
    <property type="project" value="TreeGrafter"/>
</dbReference>
<dbReference type="GO" id="GO:0003729">
    <property type="term" value="F:mRNA binding"/>
    <property type="evidence" value="ECO:0007669"/>
    <property type="project" value="UniProtKB-UniRule"/>
</dbReference>
<dbReference type="GO" id="GO:0019843">
    <property type="term" value="F:rRNA binding"/>
    <property type="evidence" value="ECO:0007669"/>
    <property type="project" value="UniProtKB-UniRule"/>
</dbReference>
<dbReference type="GO" id="GO:0003735">
    <property type="term" value="F:structural constituent of ribosome"/>
    <property type="evidence" value="ECO:0007669"/>
    <property type="project" value="InterPro"/>
</dbReference>
<dbReference type="GO" id="GO:0006412">
    <property type="term" value="P:translation"/>
    <property type="evidence" value="ECO:0007669"/>
    <property type="project" value="UniProtKB-UniRule"/>
</dbReference>
<dbReference type="CDD" id="cd02412">
    <property type="entry name" value="KH-II_30S_S3"/>
    <property type="match status" value="1"/>
</dbReference>
<dbReference type="FunFam" id="3.30.1140.32:FF:000006">
    <property type="entry name" value="30S ribosomal protein S3"/>
    <property type="match status" value="1"/>
</dbReference>
<dbReference type="FunFam" id="3.30.300.20:FF:000001">
    <property type="entry name" value="30S ribosomal protein S3"/>
    <property type="match status" value="1"/>
</dbReference>
<dbReference type="Gene3D" id="3.30.300.20">
    <property type="match status" value="1"/>
</dbReference>
<dbReference type="Gene3D" id="3.30.1140.32">
    <property type="entry name" value="Ribosomal protein S3, C-terminal domain"/>
    <property type="match status" value="1"/>
</dbReference>
<dbReference type="HAMAP" id="MF_01309_B">
    <property type="entry name" value="Ribosomal_uS3_B"/>
    <property type="match status" value="1"/>
</dbReference>
<dbReference type="InterPro" id="IPR004087">
    <property type="entry name" value="KH_dom"/>
</dbReference>
<dbReference type="InterPro" id="IPR015946">
    <property type="entry name" value="KH_dom-like_a/b"/>
</dbReference>
<dbReference type="InterPro" id="IPR004044">
    <property type="entry name" value="KH_dom_type_2"/>
</dbReference>
<dbReference type="InterPro" id="IPR009019">
    <property type="entry name" value="KH_sf_prok-type"/>
</dbReference>
<dbReference type="InterPro" id="IPR036419">
    <property type="entry name" value="Ribosomal_S3_C_sf"/>
</dbReference>
<dbReference type="InterPro" id="IPR005704">
    <property type="entry name" value="Ribosomal_uS3_bac-typ"/>
</dbReference>
<dbReference type="InterPro" id="IPR001351">
    <property type="entry name" value="Ribosomal_uS3_C"/>
</dbReference>
<dbReference type="InterPro" id="IPR018280">
    <property type="entry name" value="Ribosomal_uS3_CS"/>
</dbReference>
<dbReference type="NCBIfam" id="TIGR01009">
    <property type="entry name" value="rpsC_bact"/>
    <property type="match status" value="1"/>
</dbReference>
<dbReference type="PANTHER" id="PTHR11760">
    <property type="entry name" value="30S/40S RIBOSOMAL PROTEIN S3"/>
    <property type="match status" value="1"/>
</dbReference>
<dbReference type="PANTHER" id="PTHR11760:SF19">
    <property type="entry name" value="SMALL RIBOSOMAL SUBUNIT PROTEIN US3C"/>
    <property type="match status" value="1"/>
</dbReference>
<dbReference type="Pfam" id="PF07650">
    <property type="entry name" value="KH_2"/>
    <property type="match status" value="1"/>
</dbReference>
<dbReference type="Pfam" id="PF00189">
    <property type="entry name" value="Ribosomal_S3_C"/>
    <property type="match status" value="1"/>
</dbReference>
<dbReference type="SMART" id="SM00322">
    <property type="entry name" value="KH"/>
    <property type="match status" value="1"/>
</dbReference>
<dbReference type="SUPFAM" id="SSF54814">
    <property type="entry name" value="Prokaryotic type KH domain (KH-domain type II)"/>
    <property type="match status" value="1"/>
</dbReference>
<dbReference type="SUPFAM" id="SSF54821">
    <property type="entry name" value="Ribosomal protein S3 C-terminal domain"/>
    <property type="match status" value="1"/>
</dbReference>
<dbReference type="PROSITE" id="PS50823">
    <property type="entry name" value="KH_TYPE_2"/>
    <property type="match status" value="1"/>
</dbReference>
<dbReference type="PROSITE" id="PS00548">
    <property type="entry name" value="RIBOSOMAL_S3"/>
    <property type="match status" value="1"/>
</dbReference>
<evidence type="ECO:0000255" key="1">
    <source>
        <dbReference type="HAMAP-Rule" id="MF_01309"/>
    </source>
</evidence>
<evidence type="ECO:0000305" key="2"/>
<gene>
    <name evidence="1" type="primary">rpsC</name>
    <name type="ordered locus">LI0966</name>
</gene>
<comment type="function">
    <text evidence="1">Binds the lower part of the 30S subunit head. Binds mRNA in the 70S ribosome, positioning it for translation.</text>
</comment>
<comment type="subunit">
    <text evidence="1">Part of the 30S ribosomal subunit. Forms a tight complex with proteins S10 and S14.</text>
</comment>
<comment type="similarity">
    <text evidence="1">Belongs to the universal ribosomal protein uS3 family.</text>
</comment>
<keyword id="KW-1185">Reference proteome</keyword>
<keyword id="KW-0687">Ribonucleoprotein</keyword>
<keyword id="KW-0689">Ribosomal protein</keyword>
<keyword id="KW-0694">RNA-binding</keyword>
<keyword id="KW-0699">rRNA-binding</keyword>
<feature type="chain" id="PRO_0000293814" description="Small ribosomal subunit protein uS3">
    <location>
        <begin position="1"/>
        <end position="213"/>
    </location>
</feature>
<feature type="domain" description="KH type-2" evidence="1">
    <location>
        <begin position="38"/>
        <end position="106"/>
    </location>
</feature>
<accession>Q1MPQ7</accession>
<sequence>MGQKVHPYGFRLGYNKNWQSRWFSKKDYANFIYEDYKIRSYIKKLLYSAGISKMEIERAGGKICLMLSTARPGIVIGRKGVEIEKLRLELRKNFGQEFSLEVTEVRRPEVDAQLVAENIAMQLERRVAFRRAMKRTVSMARKFGAEGIKITCSGRLAGAEIARTEWYRDGRVPLQTLRADIDYGFAEAHTTYGIIGVKVWIYKGEVLDKEVEK</sequence>
<proteinExistence type="inferred from homology"/>
<protein>
    <recommendedName>
        <fullName evidence="1">Small ribosomal subunit protein uS3</fullName>
    </recommendedName>
    <alternativeName>
        <fullName evidence="2">30S ribosomal protein S3</fullName>
    </alternativeName>
</protein>
<reference key="1">
    <citation type="submission" date="2005-11" db="EMBL/GenBank/DDBJ databases">
        <title>The complete genome sequence of Lawsonia intracellularis: the causative agent of proliferative enteropathy.</title>
        <authorList>
            <person name="Kaur K."/>
            <person name="Zhang Q."/>
            <person name="Beckler D."/>
            <person name="Munir S."/>
            <person name="Li L."/>
            <person name="Kinsley K."/>
            <person name="Herron L."/>
            <person name="Peterson A."/>
            <person name="May B."/>
            <person name="Singh S."/>
            <person name="Gebhart C."/>
            <person name="Kapur V."/>
        </authorList>
    </citation>
    <scope>NUCLEOTIDE SEQUENCE [LARGE SCALE GENOMIC DNA]</scope>
    <source>
        <strain>PHE/MN1-00</strain>
    </source>
</reference>